<dbReference type="EC" id="3.2.1.89"/>
<dbReference type="EMBL" id="X91885">
    <property type="protein sequence ID" value="CAA62990.1"/>
    <property type="molecule type" value="Genomic_DNA"/>
</dbReference>
<dbReference type="EMBL" id="CP000934">
    <property type="protein sequence ID" value="ACE83887.1"/>
    <property type="molecule type" value="Genomic_DNA"/>
</dbReference>
<dbReference type="RefSeq" id="WP_012486177.1">
    <property type="nucleotide sequence ID" value="NC_010995.1"/>
</dbReference>
<dbReference type="SMR" id="P48841"/>
<dbReference type="STRING" id="498211.CJA_0497"/>
<dbReference type="CAZy" id="GH53">
    <property type="family name" value="Glycoside Hydrolase Family 53"/>
</dbReference>
<dbReference type="KEGG" id="cja:CJA_0497"/>
<dbReference type="eggNOG" id="COG3867">
    <property type="taxonomic scope" value="Bacteria"/>
</dbReference>
<dbReference type="HOGENOM" id="CLU_011259_2_1_6"/>
<dbReference type="OrthoDB" id="9768786at2"/>
<dbReference type="Proteomes" id="UP000001036">
    <property type="component" value="Chromosome"/>
</dbReference>
<dbReference type="GO" id="GO:0031218">
    <property type="term" value="F:arabinogalactan endo-1,4-beta-galactosidase activity"/>
    <property type="evidence" value="ECO:0007669"/>
    <property type="project" value="UniProtKB-EC"/>
</dbReference>
<dbReference type="GO" id="GO:0015926">
    <property type="term" value="F:glucosidase activity"/>
    <property type="evidence" value="ECO:0007669"/>
    <property type="project" value="InterPro"/>
</dbReference>
<dbReference type="GO" id="GO:0046872">
    <property type="term" value="F:metal ion binding"/>
    <property type="evidence" value="ECO:0007669"/>
    <property type="project" value="UniProtKB-KW"/>
</dbReference>
<dbReference type="GO" id="GO:0045490">
    <property type="term" value="P:pectin catabolic process"/>
    <property type="evidence" value="ECO:0007669"/>
    <property type="project" value="TreeGrafter"/>
</dbReference>
<dbReference type="Gene3D" id="3.20.20.80">
    <property type="entry name" value="Glycosidases"/>
    <property type="match status" value="1"/>
</dbReference>
<dbReference type="InterPro" id="IPR011683">
    <property type="entry name" value="Glyco_hydro_53"/>
</dbReference>
<dbReference type="InterPro" id="IPR017853">
    <property type="entry name" value="Glycoside_hydrolase_SF"/>
</dbReference>
<dbReference type="PANTHER" id="PTHR34983">
    <property type="entry name" value="ARABINOGALACTAN ENDO-BETA-1,4-GALACTANASE A"/>
    <property type="match status" value="1"/>
</dbReference>
<dbReference type="PANTHER" id="PTHR34983:SF2">
    <property type="entry name" value="ENDO-BETA-1,4-GALACTANASE"/>
    <property type="match status" value="1"/>
</dbReference>
<dbReference type="Pfam" id="PF07745">
    <property type="entry name" value="Glyco_hydro_53"/>
    <property type="match status" value="1"/>
</dbReference>
<dbReference type="SUPFAM" id="SSF51445">
    <property type="entry name" value="(Trans)glycosidases"/>
    <property type="match status" value="1"/>
</dbReference>
<gene>
    <name type="primary">ganB</name>
    <name type="synonym">gal53A-2</name>
    <name type="synonym">galA</name>
    <name type="synonym">ganA</name>
    <name type="ordered locus">CJA_0497</name>
</gene>
<name>GANA_CELJU</name>
<organism>
    <name type="scientific">Cellvibrio japonicus (strain Ueda107)</name>
    <name type="common">Pseudomonas fluorescens subsp. cellulosa</name>
    <dbReference type="NCBI Taxonomy" id="498211"/>
    <lineage>
        <taxon>Bacteria</taxon>
        <taxon>Pseudomonadati</taxon>
        <taxon>Pseudomonadota</taxon>
        <taxon>Gammaproteobacteria</taxon>
        <taxon>Cellvibrionales</taxon>
        <taxon>Cellvibrionaceae</taxon>
        <taxon>Cellvibrio</taxon>
    </lineage>
</organism>
<keyword id="KW-0106">Calcium</keyword>
<keyword id="KW-0326">Glycosidase</keyword>
<keyword id="KW-0378">Hydrolase</keyword>
<keyword id="KW-0479">Metal-binding</keyword>
<keyword id="KW-1185">Reference proteome</keyword>
<keyword id="KW-0732">Signal</keyword>
<comment type="catalytic activity">
    <reaction>
        <text>The enzyme specifically hydrolyzes (1-&gt;4)-beta-D-galactosidic linkages in type I arabinogalactans.</text>
        <dbReference type="EC" id="3.2.1.89"/>
    </reaction>
</comment>
<comment type="cofactor">
    <cofactor evidence="1">
        <name>Ca(2+)</name>
        <dbReference type="ChEBI" id="CHEBI:29108"/>
    </cofactor>
    <text evidence="1">Binds 1 Ca(2+) ion per subunit.</text>
</comment>
<comment type="biophysicochemical properties">
    <kinetics>
        <KM evidence="3">2.3 mM for 2,4-dinitrophenyl-beta-galactobioside (at pH 7 and 37 degrees Celsius)</KM>
    </kinetics>
    <phDependence>
        <text evidence="3">Optimum pH is 7.5.</text>
    </phDependence>
    <temperatureDependence>
        <text evidence="3">Optimum temperature is 60 degrees Celsius.</text>
    </temperatureDependence>
</comment>
<comment type="induction">
    <text evidence="3">By galactan.</text>
</comment>
<comment type="similarity">
    <text evidence="4">Belongs to the glycosyl hydrolase 53 family.</text>
</comment>
<feature type="signal peptide" evidence="2">
    <location>
        <begin position="1"/>
        <end position="17"/>
    </location>
</feature>
<feature type="chain" id="PRO_0000012220" description="Arabinogalactan endo-beta-1,4-galactanase">
    <location>
        <begin position="18"/>
        <end position="376"/>
    </location>
</feature>
<feature type="active site" description="Proton donor">
    <location>
        <position position="161"/>
    </location>
</feature>
<feature type="active site" description="Nucleophile">
    <location>
        <position position="270"/>
    </location>
</feature>
<feature type="binding site" evidence="1">
    <location>
        <position position="281"/>
    </location>
    <ligand>
        <name>Ca(2+)</name>
        <dbReference type="ChEBI" id="CHEBI:29108"/>
    </ligand>
</feature>
<feature type="binding site" evidence="1">
    <location>
        <position position="285"/>
    </location>
    <ligand>
        <name>Ca(2+)</name>
        <dbReference type="ChEBI" id="CHEBI:29108"/>
    </ligand>
</feature>
<feature type="mutagenesis site" description="Partial loss of activity." evidence="3">
    <original>E</original>
    <variation>A</variation>
    <location>
        <position position="161"/>
    </location>
</feature>
<feature type="mutagenesis site" description="Complete loss of activity." evidence="3">
    <original>E</original>
    <variation>A</variation>
    <location>
        <position position="270"/>
    </location>
</feature>
<protein>
    <recommendedName>
        <fullName>Arabinogalactan endo-beta-1,4-galactanase</fullName>
        <ecNumber>3.2.1.89</ecNumber>
    </recommendedName>
    <alternativeName>
        <fullName>Endo-1,4-beta-galactanase</fullName>
        <shortName>Galactanase</shortName>
    </alternativeName>
</protein>
<evidence type="ECO:0000250" key="1"/>
<evidence type="ECO:0000255" key="2"/>
<evidence type="ECO:0000269" key="3">
    <source>
    </source>
</evidence>
<evidence type="ECO:0000305" key="4"/>
<accession>P48841</accession>
<accession>B3PIY6</accession>
<proteinExistence type="evidence at protein level"/>
<reference key="1">
    <citation type="journal article" date="1997" name="Biochemistry">
        <title>Evidence that galactanase A from Pseudomonas fluorescens subspecies cellulosa is a retaining family 53 glycosyl hydrolase in which E161 and E270 are the catalytic residues.</title>
        <authorList>
            <person name="Braithwaite K.L."/>
            <person name="Barna T."/>
            <person name="Spurway T.D."/>
            <person name="Charnock S.J."/>
            <person name="Black G.W."/>
            <person name="Hughes N."/>
            <person name="Lakey J.H."/>
            <person name="Virden R."/>
            <person name="Hazlewood G.P."/>
            <person name="Henrissat B."/>
            <person name="Gilbert H.J."/>
        </authorList>
    </citation>
    <scope>NUCLEOTIDE SEQUENCE [GENOMIC DNA]</scope>
    <scope>REACTION MECHANISM</scope>
    <scope>INDUCTION</scope>
    <scope>BIOPHYSICOCHEMICAL PROPERTIES</scope>
    <scope>MUTAGENESIS OF GLU-161 AND GLU-270</scope>
</reference>
<reference key="2">
    <citation type="journal article" date="2008" name="J. Bacteriol.">
        <title>Insights into plant cell wall degradation from the genome sequence of the soil bacterium Cellvibrio japonicus.</title>
        <authorList>
            <person name="DeBoy R.T."/>
            <person name="Mongodin E.F."/>
            <person name="Fouts D.E."/>
            <person name="Tailford L.E."/>
            <person name="Khouri H."/>
            <person name="Emerson J.B."/>
            <person name="Mohamoud Y."/>
            <person name="Watkins K."/>
            <person name="Henrissat B."/>
            <person name="Gilbert H.J."/>
            <person name="Nelson K.E."/>
        </authorList>
    </citation>
    <scope>NUCLEOTIDE SEQUENCE [LARGE SCALE GENOMIC DNA]</scope>
    <source>
        <strain>Ueda107</strain>
    </source>
</reference>
<sequence>MKKKILAATAILLAAIANTGVADNTPFYVGADLSYVNEMESCGATYRDQGKKVDPFQLFADKGADLVRVRLWHNATWTKYSDLKDVSKTLKRAKNAGMKTLLDFHYSDTWTDPEKQFIPKAWAHITDTKELAKALYDYTTDTLASLDQQQLLPNLVQVGNETNIEILQAEDTLVHGIPNWQRNATLLNSGVNAVRDYSKKTGKPIQVVLHIAQPENALWWFKQAKENGVIDYDVIGLSYYPQWSEYSLPQLPDAIAELQNTYHKPVMIVETAYPWTLHNFDQAGNVLGEKAVQPEFPASPRGQLTYLLTLTQLVKSAGGMGVIYWEPAWVSTRCRTLWGKGSHWENASFFDATRKNNALPAFLFFKADYQASAQAE</sequence>